<sequence length="600" mass="67918">MRVTTSFPLGTLRDTPSEAEIISHQLLLQAGYIRRVNSGIYAYMPIMLRVIEKISAIIERELNSIGCTKLLLPQLHPADLWRKSERWEGYTAGEGIMFNLKDRQGKEFGLAPTHEEVITSIASETINSYKQLPQCFYQIQTKFRDEIRPRFGLMRSREFIMKDGYSFHSSEKDLASFYEKVGNAYENIFKSCGLETVGVEADSGAIGGASSKEFMVTADAGEDSILFTKSGSYAANIEKAVSLPSQPIPIKDNIAEWLETPHQKTILEVCDNNNLDPSQIIKVVIFLAQFEGEFEVPILACIRGDQHINEVKLFNLINKLHNFNLINLQKIEDKNTIEKNLVDFPLGFIGPDLDNKTIKASSNWVKKWTRIIDPSASELSKFISGGNKVNFHKLFQEFSFASKDYLIGDIRNAKKGDKISIANDEELKEKKGIEIGHIFQLGQKYSEKLNAKFSDKDGTLKNLWMGCYGIGVTRIAQAAIEQNHDQKGICWPIQISPFEVIIIPTNLKDPIQSELTEQIYNNFLINKIDVLLDDRNDRAGVKFKDAELIGIPFQIIIGRDSVNKEVELLSRTNNTKFKISTDKLLETFISESEIMYNKNS</sequence>
<accession>A8G3M4</accession>
<reference key="1">
    <citation type="journal article" date="2007" name="PLoS Genet.">
        <title>Patterns and implications of gene gain and loss in the evolution of Prochlorococcus.</title>
        <authorList>
            <person name="Kettler G.C."/>
            <person name="Martiny A.C."/>
            <person name="Huang K."/>
            <person name="Zucker J."/>
            <person name="Coleman M.L."/>
            <person name="Rodrigue S."/>
            <person name="Chen F."/>
            <person name="Lapidus A."/>
            <person name="Ferriera S."/>
            <person name="Johnson J."/>
            <person name="Steglich C."/>
            <person name="Church G.M."/>
            <person name="Richardson P."/>
            <person name="Chisholm S.W."/>
        </authorList>
    </citation>
    <scope>NUCLEOTIDE SEQUENCE [LARGE SCALE GENOMIC DNA]</scope>
    <source>
        <strain>MIT 9215</strain>
    </source>
</reference>
<proteinExistence type="inferred from homology"/>
<evidence type="ECO:0000255" key="1">
    <source>
        <dbReference type="HAMAP-Rule" id="MF_01569"/>
    </source>
</evidence>
<name>SYP_PROM2</name>
<feature type="chain" id="PRO_1000069153" description="Proline--tRNA ligase">
    <location>
        <begin position="1"/>
        <end position="600"/>
    </location>
</feature>
<dbReference type="EC" id="6.1.1.15" evidence="1"/>
<dbReference type="EMBL" id="CP000825">
    <property type="protein sequence ID" value="ABV50205.1"/>
    <property type="molecule type" value="Genomic_DNA"/>
</dbReference>
<dbReference type="RefSeq" id="WP_012007332.1">
    <property type="nucleotide sequence ID" value="NC_009840.1"/>
</dbReference>
<dbReference type="SMR" id="A8G3M4"/>
<dbReference type="STRING" id="93060.P9215_05901"/>
<dbReference type="KEGG" id="pmh:P9215_05901"/>
<dbReference type="eggNOG" id="COG0442">
    <property type="taxonomic scope" value="Bacteria"/>
</dbReference>
<dbReference type="HOGENOM" id="CLU_016739_0_0_3"/>
<dbReference type="OrthoDB" id="9809052at2"/>
<dbReference type="Proteomes" id="UP000002014">
    <property type="component" value="Chromosome"/>
</dbReference>
<dbReference type="GO" id="GO:0005829">
    <property type="term" value="C:cytosol"/>
    <property type="evidence" value="ECO:0007669"/>
    <property type="project" value="TreeGrafter"/>
</dbReference>
<dbReference type="GO" id="GO:0002161">
    <property type="term" value="F:aminoacyl-tRNA deacylase activity"/>
    <property type="evidence" value="ECO:0007669"/>
    <property type="project" value="InterPro"/>
</dbReference>
<dbReference type="GO" id="GO:0005524">
    <property type="term" value="F:ATP binding"/>
    <property type="evidence" value="ECO:0007669"/>
    <property type="project" value="UniProtKB-UniRule"/>
</dbReference>
<dbReference type="GO" id="GO:0004827">
    <property type="term" value="F:proline-tRNA ligase activity"/>
    <property type="evidence" value="ECO:0007669"/>
    <property type="project" value="UniProtKB-UniRule"/>
</dbReference>
<dbReference type="GO" id="GO:0006433">
    <property type="term" value="P:prolyl-tRNA aminoacylation"/>
    <property type="evidence" value="ECO:0007669"/>
    <property type="project" value="UniProtKB-UniRule"/>
</dbReference>
<dbReference type="CDD" id="cd04334">
    <property type="entry name" value="ProRS-INS"/>
    <property type="match status" value="1"/>
</dbReference>
<dbReference type="CDD" id="cd00861">
    <property type="entry name" value="ProRS_anticodon_short"/>
    <property type="match status" value="1"/>
</dbReference>
<dbReference type="Gene3D" id="3.40.50.800">
    <property type="entry name" value="Anticodon-binding domain"/>
    <property type="match status" value="1"/>
</dbReference>
<dbReference type="Gene3D" id="3.30.930.10">
    <property type="entry name" value="Bira Bifunctional Protein, Domain 2"/>
    <property type="match status" value="2"/>
</dbReference>
<dbReference type="HAMAP" id="MF_01569">
    <property type="entry name" value="Pro_tRNA_synth_type1"/>
    <property type="match status" value="1"/>
</dbReference>
<dbReference type="InterPro" id="IPR002314">
    <property type="entry name" value="aa-tRNA-synt_IIb"/>
</dbReference>
<dbReference type="InterPro" id="IPR006195">
    <property type="entry name" value="aa-tRNA-synth_II"/>
</dbReference>
<dbReference type="InterPro" id="IPR045864">
    <property type="entry name" value="aa-tRNA-synth_II/BPL/LPL"/>
</dbReference>
<dbReference type="InterPro" id="IPR004154">
    <property type="entry name" value="Anticodon-bd"/>
</dbReference>
<dbReference type="InterPro" id="IPR036621">
    <property type="entry name" value="Anticodon-bd_dom_sf"/>
</dbReference>
<dbReference type="InterPro" id="IPR002316">
    <property type="entry name" value="Pro-tRNA-ligase_IIa"/>
</dbReference>
<dbReference type="InterPro" id="IPR004500">
    <property type="entry name" value="Pro-tRNA-synth_IIa_bac-type"/>
</dbReference>
<dbReference type="InterPro" id="IPR023717">
    <property type="entry name" value="Pro-tRNA-Synthase_IIa_type1"/>
</dbReference>
<dbReference type="InterPro" id="IPR050062">
    <property type="entry name" value="Pro-tRNA_synthetase"/>
</dbReference>
<dbReference type="InterPro" id="IPR044140">
    <property type="entry name" value="ProRS_anticodon_short"/>
</dbReference>
<dbReference type="InterPro" id="IPR036754">
    <property type="entry name" value="YbaK/aa-tRNA-synt-asso_dom_sf"/>
</dbReference>
<dbReference type="InterPro" id="IPR007214">
    <property type="entry name" value="YbaK/aa-tRNA-synth-assoc-dom"/>
</dbReference>
<dbReference type="NCBIfam" id="NF006625">
    <property type="entry name" value="PRK09194.1"/>
    <property type="match status" value="1"/>
</dbReference>
<dbReference type="NCBIfam" id="TIGR00409">
    <property type="entry name" value="proS_fam_II"/>
    <property type="match status" value="1"/>
</dbReference>
<dbReference type="PANTHER" id="PTHR42753">
    <property type="entry name" value="MITOCHONDRIAL RIBOSOME PROTEIN L39/PROLYL-TRNA LIGASE FAMILY MEMBER"/>
    <property type="match status" value="1"/>
</dbReference>
<dbReference type="PANTHER" id="PTHR42753:SF2">
    <property type="entry name" value="PROLINE--TRNA LIGASE"/>
    <property type="match status" value="1"/>
</dbReference>
<dbReference type="Pfam" id="PF03129">
    <property type="entry name" value="HGTP_anticodon"/>
    <property type="match status" value="1"/>
</dbReference>
<dbReference type="Pfam" id="PF00587">
    <property type="entry name" value="tRNA-synt_2b"/>
    <property type="match status" value="1"/>
</dbReference>
<dbReference type="Pfam" id="PF04073">
    <property type="entry name" value="tRNA_edit"/>
    <property type="match status" value="1"/>
</dbReference>
<dbReference type="PRINTS" id="PR01046">
    <property type="entry name" value="TRNASYNTHPRO"/>
</dbReference>
<dbReference type="SUPFAM" id="SSF52954">
    <property type="entry name" value="Class II aaRS ABD-related"/>
    <property type="match status" value="1"/>
</dbReference>
<dbReference type="SUPFAM" id="SSF55681">
    <property type="entry name" value="Class II aaRS and biotin synthetases"/>
    <property type="match status" value="1"/>
</dbReference>
<dbReference type="SUPFAM" id="SSF55826">
    <property type="entry name" value="YbaK/ProRS associated domain"/>
    <property type="match status" value="1"/>
</dbReference>
<dbReference type="PROSITE" id="PS50862">
    <property type="entry name" value="AA_TRNA_LIGASE_II"/>
    <property type="match status" value="1"/>
</dbReference>
<organism>
    <name type="scientific">Prochlorococcus marinus (strain MIT 9215)</name>
    <dbReference type="NCBI Taxonomy" id="93060"/>
    <lineage>
        <taxon>Bacteria</taxon>
        <taxon>Bacillati</taxon>
        <taxon>Cyanobacteriota</taxon>
        <taxon>Cyanophyceae</taxon>
        <taxon>Synechococcales</taxon>
        <taxon>Prochlorococcaceae</taxon>
        <taxon>Prochlorococcus</taxon>
    </lineage>
</organism>
<protein>
    <recommendedName>
        <fullName evidence="1">Proline--tRNA ligase</fullName>
        <ecNumber evidence="1">6.1.1.15</ecNumber>
    </recommendedName>
    <alternativeName>
        <fullName evidence="1">Prolyl-tRNA synthetase</fullName>
        <shortName evidence="1">ProRS</shortName>
    </alternativeName>
</protein>
<comment type="function">
    <text evidence="1">Catalyzes the attachment of proline to tRNA(Pro) in a two-step reaction: proline is first activated by ATP to form Pro-AMP and then transferred to the acceptor end of tRNA(Pro). As ProRS can inadvertently accommodate and process non-cognate amino acids such as alanine and cysteine, to avoid such errors it has two additional distinct editing activities against alanine. One activity is designated as 'pretransfer' editing and involves the tRNA(Pro)-independent hydrolysis of activated Ala-AMP. The other activity is designated 'posttransfer' editing and involves deacylation of mischarged Ala-tRNA(Pro). The misacylated Cys-tRNA(Pro) is not edited by ProRS.</text>
</comment>
<comment type="catalytic activity">
    <reaction evidence="1">
        <text>tRNA(Pro) + L-proline + ATP = L-prolyl-tRNA(Pro) + AMP + diphosphate</text>
        <dbReference type="Rhea" id="RHEA:14305"/>
        <dbReference type="Rhea" id="RHEA-COMP:9700"/>
        <dbReference type="Rhea" id="RHEA-COMP:9702"/>
        <dbReference type="ChEBI" id="CHEBI:30616"/>
        <dbReference type="ChEBI" id="CHEBI:33019"/>
        <dbReference type="ChEBI" id="CHEBI:60039"/>
        <dbReference type="ChEBI" id="CHEBI:78442"/>
        <dbReference type="ChEBI" id="CHEBI:78532"/>
        <dbReference type="ChEBI" id="CHEBI:456215"/>
        <dbReference type="EC" id="6.1.1.15"/>
    </reaction>
</comment>
<comment type="subunit">
    <text evidence="1">Homodimer.</text>
</comment>
<comment type="subcellular location">
    <subcellularLocation>
        <location evidence="1">Cytoplasm</location>
    </subcellularLocation>
</comment>
<comment type="domain">
    <text evidence="1">Consists of three domains: the N-terminal catalytic domain, the editing domain and the C-terminal anticodon-binding domain.</text>
</comment>
<comment type="similarity">
    <text evidence="1">Belongs to the class-II aminoacyl-tRNA synthetase family. ProS type 1 subfamily.</text>
</comment>
<keyword id="KW-0030">Aminoacyl-tRNA synthetase</keyword>
<keyword id="KW-0067">ATP-binding</keyword>
<keyword id="KW-0963">Cytoplasm</keyword>
<keyword id="KW-0436">Ligase</keyword>
<keyword id="KW-0547">Nucleotide-binding</keyword>
<keyword id="KW-0648">Protein biosynthesis</keyword>
<gene>
    <name evidence="1" type="primary">proS</name>
    <name type="ordered locus">P9215_05901</name>
</gene>